<evidence type="ECO:0000255" key="1">
    <source>
        <dbReference type="HAMAP-Rule" id="MF_01367"/>
    </source>
</evidence>
<evidence type="ECO:0000305" key="2"/>
<comment type="function">
    <text evidence="1">Binds to 23S rRNA.</text>
</comment>
<comment type="subunit">
    <text evidence="1">Part of the 50S ribosomal subunit.</text>
</comment>
<comment type="subcellular location">
    <subcellularLocation>
        <location>Plastid</location>
        <location>Chloroplast</location>
    </subcellularLocation>
</comment>
<comment type="similarity">
    <text evidence="1">Belongs to the universal ribosomal protein uL14 family.</text>
</comment>
<accession>Q2MI64</accession>
<proteinExistence type="inferred from homology"/>
<name>RK14_SOLLC</name>
<organism>
    <name type="scientific">Solanum lycopersicum</name>
    <name type="common">Tomato</name>
    <name type="synonym">Lycopersicon esculentum</name>
    <dbReference type="NCBI Taxonomy" id="4081"/>
    <lineage>
        <taxon>Eukaryota</taxon>
        <taxon>Viridiplantae</taxon>
        <taxon>Streptophyta</taxon>
        <taxon>Embryophyta</taxon>
        <taxon>Tracheophyta</taxon>
        <taxon>Spermatophyta</taxon>
        <taxon>Magnoliopsida</taxon>
        <taxon>eudicotyledons</taxon>
        <taxon>Gunneridae</taxon>
        <taxon>Pentapetalae</taxon>
        <taxon>asterids</taxon>
        <taxon>lamiids</taxon>
        <taxon>Solanales</taxon>
        <taxon>Solanaceae</taxon>
        <taxon>Solanoideae</taxon>
        <taxon>Solaneae</taxon>
        <taxon>Solanum</taxon>
        <taxon>Solanum subgen. Lycopersicon</taxon>
    </lineage>
</organism>
<geneLocation type="chloroplast"/>
<keyword id="KW-0150">Chloroplast</keyword>
<keyword id="KW-0934">Plastid</keyword>
<keyword id="KW-1185">Reference proteome</keyword>
<keyword id="KW-0687">Ribonucleoprotein</keyword>
<keyword id="KW-0689">Ribosomal protein</keyword>
<keyword id="KW-0694">RNA-binding</keyword>
<keyword id="KW-0699">rRNA-binding</keyword>
<feature type="chain" id="PRO_0000276365" description="Large ribosomal subunit protein uL14c">
    <location>
        <begin position="1"/>
        <end position="122"/>
    </location>
</feature>
<sequence>MIQPQTHLNVADNSGARELMCIRIIGASNRRYAHIGDVIVAVIKEAVPNMPLERSEVVRAVIVRTCKELKRDNGMIIRYDDNAAVVIDQEGNPKGTRIFGAIARELRELNFTKIVSLAPEVL</sequence>
<dbReference type="EMBL" id="DQ347959">
    <property type="protein sequence ID" value="ABC56336.1"/>
    <property type="molecule type" value="Genomic_DNA"/>
</dbReference>
<dbReference type="EMBL" id="AM087200">
    <property type="protein sequence ID" value="CAJ32430.1"/>
    <property type="molecule type" value="Genomic_DNA"/>
</dbReference>
<dbReference type="RefSeq" id="AP_004964.1">
    <property type="nucleotide sequence ID" value="AC_000188.1"/>
</dbReference>
<dbReference type="RefSeq" id="YP_008563125.1">
    <property type="nucleotide sequence ID" value="NC_007898.3"/>
</dbReference>
<dbReference type="SMR" id="Q2MI64"/>
<dbReference type="FunCoup" id="Q2MI64">
    <property type="interactions" value="465"/>
</dbReference>
<dbReference type="STRING" id="4081.Q2MI64"/>
<dbReference type="PaxDb" id="4081-Solyc01g007590.2.1"/>
<dbReference type="GeneID" id="3950421"/>
<dbReference type="KEGG" id="sly:3950421"/>
<dbReference type="eggNOG" id="KOG0901">
    <property type="taxonomic scope" value="Eukaryota"/>
</dbReference>
<dbReference type="HOGENOM" id="CLU_095071_2_1_1"/>
<dbReference type="InParanoid" id="Q2MI64"/>
<dbReference type="OrthoDB" id="274765at2759"/>
<dbReference type="PhylomeDB" id="Q2MI64"/>
<dbReference type="Proteomes" id="UP000004994">
    <property type="component" value="Chloroplast"/>
</dbReference>
<dbReference type="GO" id="GO:0009507">
    <property type="term" value="C:chloroplast"/>
    <property type="evidence" value="ECO:0007669"/>
    <property type="project" value="UniProtKB-SubCell"/>
</dbReference>
<dbReference type="GO" id="GO:0022625">
    <property type="term" value="C:cytosolic large ribosomal subunit"/>
    <property type="evidence" value="ECO:0000318"/>
    <property type="project" value="GO_Central"/>
</dbReference>
<dbReference type="GO" id="GO:0070180">
    <property type="term" value="F:large ribosomal subunit rRNA binding"/>
    <property type="evidence" value="ECO:0000318"/>
    <property type="project" value="GO_Central"/>
</dbReference>
<dbReference type="GO" id="GO:0003735">
    <property type="term" value="F:structural constituent of ribosome"/>
    <property type="evidence" value="ECO:0000318"/>
    <property type="project" value="GO_Central"/>
</dbReference>
<dbReference type="GO" id="GO:0006412">
    <property type="term" value="P:translation"/>
    <property type="evidence" value="ECO:0007669"/>
    <property type="project" value="UniProtKB-UniRule"/>
</dbReference>
<dbReference type="CDD" id="cd00337">
    <property type="entry name" value="Ribosomal_uL14"/>
    <property type="match status" value="1"/>
</dbReference>
<dbReference type="FunFam" id="2.40.150.20:FF:000002">
    <property type="entry name" value="50S ribosomal protein L14, chloroplastic"/>
    <property type="match status" value="1"/>
</dbReference>
<dbReference type="Gene3D" id="2.40.150.20">
    <property type="entry name" value="Ribosomal protein L14"/>
    <property type="match status" value="1"/>
</dbReference>
<dbReference type="HAMAP" id="MF_01367">
    <property type="entry name" value="Ribosomal_uL14"/>
    <property type="match status" value="1"/>
</dbReference>
<dbReference type="InterPro" id="IPR000218">
    <property type="entry name" value="Ribosomal_uL14"/>
</dbReference>
<dbReference type="InterPro" id="IPR005745">
    <property type="entry name" value="Ribosomal_uL14_bac-type"/>
</dbReference>
<dbReference type="InterPro" id="IPR019972">
    <property type="entry name" value="Ribosomal_uL14_CS"/>
</dbReference>
<dbReference type="InterPro" id="IPR036853">
    <property type="entry name" value="Ribosomal_uL14_sf"/>
</dbReference>
<dbReference type="NCBIfam" id="TIGR01067">
    <property type="entry name" value="rplN_bact"/>
    <property type="match status" value="1"/>
</dbReference>
<dbReference type="PANTHER" id="PTHR11761">
    <property type="entry name" value="50S/60S RIBOSOMAL PROTEIN L14/L23"/>
    <property type="match status" value="1"/>
</dbReference>
<dbReference type="PANTHER" id="PTHR11761:SF3">
    <property type="entry name" value="LARGE RIBOSOMAL SUBUNIT PROTEIN UL14M"/>
    <property type="match status" value="1"/>
</dbReference>
<dbReference type="Pfam" id="PF00238">
    <property type="entry name" value="Ribosomal_L14"/>
    <property type="match status" value="1"/>
</dbReference>
<dbReference type="SMART" id="SM01374">
    <property type="entry name" value="Ribosomal_L14"/>
    <property type="match status" value="1"/>
</dbReference>
<dbReference type="SUPFAM" id="SSF50193">
    <property type="entry name" value="Ribosomal protein L14"/>
    <property type="match status" value="1"/>
</dbReference>
<dbReference type="PROSITE" id="PS00049">
    <property type="entry name" value="RIBOSOMAL_L14"/>
    <property type="match status" value="1"/>
</dbReference>
<reference key="1">
    <citation type="journal article" date="2006" name="Theor. Appl. Genet.">
        <title>Complete chloroplast genome sequences of Solanum bulbocastanum, Solanum lycopersicum and comparative analyses with other Solanaceae genomes.</title>
        <authorList>
            <person name="Daniell H."/>
            <person name="Lee S.-B."/>
            <person name="Grevich J."/>
            <person name="Saski C."/>
            <person name="Quesada-Vargas T."/>
            <person name="Guda C."/>
            <person name="Tomkins J."/>
            <person name="Jansen R.K."/>
        </authorList>
    </citation>
    <scope>NUCLEOTIDE SEQUENCE [LARGE SCALE GENOMIC DNA]</scope>
    <source>
        <strain>cv. LA3023</strain>
    </source>
</reference>
<reference key="2">
    <citation type="journal article" date="2006" name="J. Mol. Evol.">
        <title>Sequence of the tomato chloroplast DNA and evolutionary comparison of solanaceous plastid genomes.</title>
        <authorList>
            <person name="Kahlau S."/>
            <person name="Aspinall S."/>
            <person name="Gray J.C."/>
            <person name="Bock R."/>
        </authorList>
    </citation>
    <scope>NUCLEOTIDE SEQUENCE [LARGE SCALE GENOMIC DNA]</scope>
    <source>
        <strain>cv. IPA-6</strain>
    </source>
</reference>
<gene>
    <name evidence="1" type="primary">rpl14</name>
</gene>
<protein>
    <recommendedName>
        <fullName evidence="1">Large ribosomal subunit protein uL14c</fullName>
    </recommendedName>
    <alternativeName>
        <fullName evidence="2">50S ribosomal protein L14, chloroplastic</fullName>
    </alternativeName>
</protein>